<reference key="1">
    <citation type="journal article" date="2013" name="Nature">
        <title>The zebrafish reference genome sequence and its relationship to the human genome.</title>
        <authorList>
            <person name="Howe K."/>
            <person name="Clark M.D."/>
            <person name="Torroja C.F."/>
            <person name="Torrance J."/>
            <person name="Berthelot C."/>
            <person name="Muffato M."/>
            <person name="Collins J.E."/>
            <person name="Humphray S."/>
            <person name="McLaren K."/>
            <person name="Matthews L."/>
            <person name="McLaren S."/>
            <person name="Sealy I."/>
            <person name="Caccamo M."/>
            <person name="Churcher C."/>
            <person name="Scott C."/>
            <person name="Barrett J.C."/>
            <person name="Koch R."/>
            <person name="Rauch G.J."/>
            <person name="White S."/>
            <person name="Chow W."/>
            <person name="Kilian B."/>
            <person name="Quintais L.T."/>
            <person name="Guerra-Assuncao J.A."/>
            <person name="Zhou Y."/>
            <person name="Gu Y."/>
            <person name="Yen J."/>
            <person name="Vogel J.H."/>
            <person name="Eyre T."/>
            <person name="Redmond S."/>
            <person name="Banerjee R."/>
            <person name="Chi J."/>
            <person name="Fu B."/>
            <person name="Langley E."/>
            <person name="Maguire S.F."/>
            <person name="Laird G.K."/>
            <person name="Lloyd D."/>
            <person name="Kenyon E."/>
            <person name="Donaldson S."/>
            <person name="Sehra H."/>
            <person name="Almeida-King J."/>
            <person name="Loveland J."/>
            <person name="Trevanion S."/>
            <person name="Jones M."/>
            <person name="Quail M."/>
            <person name="Willey D."/>
            <person name="Hunt A."/>
            <person name="Burton J."/>
            <person name="Sims S."/>
            <person name="McLay K."/>
            <person name="Plumb B."/>
            <person name="Davis J."/>
            <person name="Clee C."/>
            <person name="Oliver K."/>
            <person name="Clark R."/>
            <person name="Riddle C."/>
            <person name="Elliot D."/>
            <person name="Threadgold G."/>
            <person name="Harden G."/>
            <person name="Ware D."/>
            <person name="Begum S."/>
            <person name="Mortimore B."/>
            <person name="Kerry G."/>
            <person name="Heath P."/>
            <person name="Phillimore B."/>
            <person name="Tracey A."/>
            <person name="Corby N."/>
            <person name="Dunn M."/>
            <person name="Johnson C."/>
            <person name="Wood J."/>
            <person name="Clark S."/>
            <person name="Pelan S."/>
            <person name="Griffiths G."/>
            <person name="Smith M."/>
            <person name="Glithero R."/>
            <person name="Howden P."/>
            <person name="Barker N."/>
            <person name="Lloyd C."/>
            <person name="Stevens C."/>
            <person name="Harley J."/>
            <person name="Holt K."/>
            <person name="Panagiotidis G."/>
            <person name="Lovell J."/>
            <person name="Beasley H."/>
            <person name="Henderson C."/>
            <person name="Gordon D."/>
            <person name="Auger K."/>
            <person name="Wright D."/>
            <person name="Collins J."/>
            <person name="Raisen C."/>
            <person name="Dyer L."/>
            <person name="Leung K."/>
            <person name="Robertson L."/>
            <person name="Ambridge K."/>
            <person name="Leongamornlert D."/>
            <person name="McGuire S."/>
            <person name="Gilderthorp R."/>
            <person name="Griffiths C."/>
            <person name="Manthravadi D."/>
            <person name="Nichol S."/>
            <person name="Barker G."/>
            <person name="Whitehead S."/>
            <person name="Kay M."/>
            <person name="Brown J."/>
            <person name="Murnane C."/>
            <person name="Gray E."/>
            <person name="Humphries M."/>
            <person name="Sycamore N."/>
            <person name="Barker D."/>
            <person name="Saunders D."/>
            <person name="Wallis J."/>
            <person name="Babbage A."/>
            <person name="Hammond S."/>
            <person name="Mashreghi-Mohammadi M."/>
            <person name="Barr L."/>
            <person name="Martin S."/>
            <person name="Wray P."/>
            <person name="Ellington A."/>
            <person name="Matthews N."/>
            <person name="Ellwood M."/>
            <person name="Woodmansey R."/>
            <person name="Clark G."/>
            <person name="Cooper J."/>
            <person name="Tromans A."/>
            <person name="Grafham D."/>
            <person name="Skuce C."/>
            <person name="Pandian R."/>
            <person name="Andrews R."/>
            <person name="Harrison E."/>
            <person name="Kimberley A."/>
            <person name="Garnett J."/>
            <person name="Fosker N."/>
            <person name="Hall R."/>
            <person name="Garner P."/>
            <person name="Kelly D."/>
            <person name="Bird C."/>
            <person name="Palmer S."/>
            <person name="Gehring I."/>
            <person name="Berger A."/>
            <person name="Dooley C.M."/>
            <person name="Ersan-Urun Z."/>
            <person name="Eser C."/>
            <person name="Geiger H."/>
            <person name="Geisler M."/>
            <person name="Karotki L."/>
            <person name="Kirn A."/>
            <person name="Konantz J."/>
            <person name="Konantz M."/>
            <person name="Oberlander M."/>
            <person name="Rudolph-Geiger S."/>
            <person name="Teucke M."/>
            <person name="Lanz C."/>
            <person name="Raddatz G."/>
            <person name="Osoegawa K."/>
            <person name="Zhu B."/>
            <person name="Rapp A."/>
            <person name="Widaa S."/>
            <person name="Langford C."/>
            <person name="Yang F."/>
            <person name="Schuster S.C."/>
            <person name="Carter N.P."/>
            <person name="Harrow J."/>
            <person name="Ning Z."/>
            <person name="Herrero J."/>
            <person name="Searle S.M."/>
            <person name="Enright A."/>
            <person name="Geisler R."/>
            <person name="Plasterk R.H."/>
            <person name="Lee C."/>
            <person name="Westerfield M."/>
            <person name="de Jong P.J."/>
            <person name="Zon L.I."/>
            <person name="Postlethwait J.H."/>
            <person name="Nusslein-Volhard C."/>
            <person name="Hubbard T.J."/>
            <person name="Roest Crollius H."/>
            <person name="Rogers J."/>
            <person name="Stemple D.L."/>
        </authorList>
    </citation>
    <scope>NUCLEOTIDE SEQUENCE [LARGE SCALE GENOMIC DNA]</scope>
    <source>
        <strain>Tuebingen</strain>
    </source>
</reference>
<reference key="2">
    <citation type="submission" date="2003-04" db="EMBL/GenBank/DDBJ databases">
        <authorList>
            <consortium name="NIH - Zebrafish Gene Collection (ZGC) project"/>
        </authorList>
    </citation>
    <scope>NUCLEOTIDE SEQUENCE [LARGE SCALE MRNA]</scope>
    <source>
        <strain>AB</strain>
    </source>
</reference>
<comment type="function">
    <text evidence="1">Acts as a central player within a network of stress response pathways promoting cellular adaptability. Functions as a negative regulator of TP53/P53 in the cellular response to telomere erosion and probably also DNA damage.</text>
</comment>
<comment type="subunit">
    <text evidence="1">Oligomer.</text>
</comment>
<comment type="subcellular location">
    <subcellularLocation>
        <location evidence="1">Nucleus</location>
    </subcellularLocation>
    <subcellularLocation>
        <location evidence="1">Cytoplasm</location>
    </subcellularLocation>
</comment>
<comment type="similarity">
    <text evidence="3">Belongs to the HAPSTR1 family.</text>
</comment>
<dbReference type="EMBL" id="BX005261">
    <property type="protein sequence ID" value="CAM13034.1"/>
    <property type="molecule type" value="Genomic_DNA"/>
</dbReference>
<dbReference type="EMBL" id="BC050493">
    <property type="protein sequence ID" value="AAH50493.1"/>
    <property type="molecule type" value="mRNA"/>
</dbReference>
<dbReference type="EMBL" id="BC065877">
    <property type="protein sequence ID" value="AAH65877.1"/>
    <property type="molecule type" value="mRNA"/>
</dbReference>
<dbReference type="RefSeq" id="NP_955896.2">
    <property type="nucleotide sequence ID" value="NM_199602.2"/>
</dbReference>
<dbReference type="SMR" id="A2BE76"/>
<dbReference type="FunCoup" id="A2BE76">
    <property type="interactions" value="162"/>
</dbReference>
<dbReference type="STRING" id="7955.ENSDARP00000011098"/>
<dbReference type="PaxDb" id="7955-ENSDARP00000011098"/>
<dbReference type="GeneID" id="322387"/>
<dbReference type="KEGG" id="dre:322387"/>
<dbReference type="AGR" id="ZFIN:ZDB-GENE-030131-1107"/>
<dbReference type="CTD" id="322387"/>
<dbReference type="ZFIN" id="ZDB-GENE-030131-1107">
    <property type="gene designation" value="hapstr1b"/>
</dbReference>
<dbReference type="eggNOG" id="ENOG502QPPE">
    <property type="taxonomic scope" value="Eukaryota"/>
</dbReference>
<dbReference type="InParanoid" id="A2BE76"/>
<dbReference type="OrthoDB" id="5823474at2759"/>
<dbReference type="PhylomeDB" id="A2BE76"/>
<dbReference type="TreeFam" id="TF323292"/>
<dbReference type="PRO" id="PR:A2BE76"/>
<dbReference type="Proteomes" id="UP000000437">
    <property type="component" value="Alternate scaffold 1"/>
</dbReference>
<dbReference type="Proteomes" id="UP000000437">
    <property type="component" value="Chromosome 1"/>
</dbReference>
<dbReference type="GO" id="GO:0005737">
    <property type="term" value="C:cytoplasm"/>
    <property type="evidence" value="ECO:0000250"/>
    <property type="project" value="UniProtKB"/>
</dbReference>
<dbReference type="GO" id="GO:0005634">
    <property type="term" value="C:nucleus"/>
    <property type="evidence" value="ECO:0000250"/>
    <property type="project" value="UniProtKB"/>
</dbReference>
<dbReference type="GO" id="GO:0071466">
    <property type="term" value="P:cellular response to xenobiotic stimulus"/>
    <property type="evidence" value="ECO:0000314"/>
    <property type="project" value="ZFIN"/>
</dbReference>
<dbReference type="GO" id="GO:1901797">
    <property type="term" value="P:negative regulation of signal transduction by p53 class mediator"/>
    <property type="evidence" value="ECO:0000250"/>
    <property type="project" value="UniProtKB"/>
</dbReference>
<dbReference type="GO" id="GO:0080135">
    <property type="term" value="P:regulation of cellular response to stress"/>
    <property type="evidence" value="ECO:0000250"/>
    <property type="project" value="UniProtKB"/>
</dbReference>
<dbReference type="InterPro" id="IPR040308">
    <property type="entry name" value="HAPR1"/>
</dbReference>
<dbReference type="InterPro" id="IPR029196">
    <property type="entry name" value="HAPSTR1-like"/>
</dbReference>
<dbReference type="PANTHER" id="PTHR31624:SF4">
    <property type="entry name" value="CHROMOSOME 16 OPEN READING FRAME 72"/>
    <property type="match status" value="1"/>
</dbReference>
<dbReference type="PANTHER" id="PTHR31624">
    <property type="entry name" value="UPF0472 PROTEIN C16ORF72"/>
    <property type="match status" value="1"/>
</dbReference>
<dbReference type="Pfam" id="PF15251">
    <property type="entry name" value="TAPR1-like"/>
    <property type="match status" value="1"/>
</dbReference>
<gene>
    <name evidence="3" type="primary">hapstr1</name>
    <name evidence="1" type="synonym">tapr1</name>
    <name type="ORF">si:dkey-20i6.3</name>
    <name type="ORF">zgc:77849</name>
</gene>
<evidence type="ECO:0000250" key="1">
    <source>
        <dbReference type="UniProtKB" id="Q14CZ0"/>
    </source>
</evidence>
<evidence type="ECO:0000256" key="2">
    <source>
        <dbReference type="SAM" id="MobiDB-lite"/>
    </source>
</evidence>
<evidence type="ECO:0000305" key="3"/>
<feature type="chain" id="PRO_0000297629" description="HUWE1-associated protein modifying stress responses">
    <location>
        <begin position="1"/>
        <end position="265"/>
    </location>
</feature>
<feature type="region of interest" description="Disordered" evidence="2">
    <location>
        <begin position="1"/>
        <end position="22"/>
    </location>
</feature>
<feature type="region of interest" description="Disordered" evidence="2">
    <location>
        <begin position="140"/>
        <end position="173"/>
    </location>
</feature>
<feature type="region of interest" description="Disordered" evidence="2">
    <location>
        <begin position="194"/>
        <end position="219"/>
    </location>
</feature>
<feature type="compositionally biased region" description="Low complexity" evidence="2">
    <location>
        <begin position="147"/>
        <end position="172"/>
    </location>
</feature>
<feature type="sequence conflict" description="In Ref. 2; AAH50493." evidence="3" ref="2">
    <original>D</original>
    <variation>G</variation>
    <location>
        <position position="66"/>
    </location>
</feature>
<feature type="sequence conflict" description="In Ref. 2; AAH50493/AAH65877." evidence="3" ref="2">
    <original>S</original>
    <variation>P</variation>
    <location>
        <position position="162"/>
    </location>
</feature>
<feature type="sequence conflict" description="In Ref. 2; AAH50493." evidence="3" ref="2">
    <original>G</original>
    <variation>R</variation>
    <location>
        <position position="240"/>
    </location>
</feature>
<feature type="sequence conflict" description="In Ref. 2; AAH50493." evidence="3" ref="2">
    <original>K</original>
    <variation>E</variation>
    <location>
        <position position="260"/>
    </location>
</feature>
<proteinExistence type="evidence at transcript level"/>
<organism>
    <name type="scientific">Danio rerio</name>
    <name type="common">Zebrafish</name>
    <name type="synonym">Brachydanio rerio</name>
    <dbReference type="NCBI Taxonomy" id="7955"/>
    <lineage>
        <taxon>Eukaryota</taxon>
        <taxon>Metazoa</taxon>
        <taxon>Chordata</taxon>
        <taxon>Craniata</taxon>
        <taxon>Vertebrata</taxon>
        <taxon>Euteleostomi</taxon>
        <taxon>Actinopterygii</taxon>
        <taxon>Neopterygii</taxon>
        <taxon>Teleostei</taxon>
        <taxon>Ostariophysi</taxon>
        <taxon>Cypriniformes</taxon>
        <taxon>Danionidae</taxon>
        <taxon>Danioninae</taxon>
        <taxon>Danio</taxon>
    </lineage>
</organism>
<protein>
    <recommendedName>
        <fullName evidence="3">HUWE1-associated protein modifying stress responses</fullName>
    </recommendedName>
    <alternativeName>
        <fullName evidence="1">Telomere attrition and p53 response 1 protein</fullName>
    </alternativeName>
</protein>
<name>HAPR1_DANRE</name>
<sequence>MEEKKEEGEAEIQEHGPEHWFSKWERQCLAEAEQEEPAEEETDQSQQKLWHLFQNSATAVAQLYKDRVCQQQQGLSLWVPFQNAATAVTNLYKESVDAHQRSYELGIQIGHQRRNKDVLAWVKKRRRTIRREDLISFLCGKAPPPRSSRAPPRLAMVSPSRSTPSETSSSVETDLQPFREAIALHGLSGAMASISMRSGAPGSPTHLSASSAPSRRRNGLHDVDLNTFIAEEMALHLDNGTRKRSSAQCNDVITDSPTHKRNRMI</sequence>
<accession>A2BE76</accession>
<accession>Q6P014</accession>
<accession>Q7ZU95</accession>
<keyword id="KW-0963">Cytoplasm</keyword>
<keyword id="KW-0539">Nucleus</keyword>
<keyword id="KW-1185">Reference proteome</keyword>